<comment type="similarity">
    <text evidence="1">Belongs to the UPF0473 family.</text>
</comment>
<protein>
    <recommendedName>
        <fullName evidence="1">UPF0473 protein LBUL_1483</fullName>
    </recommendedName>
</protein>
<sequence>MAFEVSAEDQDRQLTLIDEDGNEELFEVLFTFHSDDNDKSYILLYPAAVEDDDEIEVQAFSYDADEDGDVTSSDLHEITSDAEWDMVQGVLNTFLEDDRLSGDDSAE</sequence>
<reference key="1">
    <citation type="journal article" date="2006" name="Proc. Natl. Acad. Sci. U.S.A.">
        <title>Comparative genomics of the lactic acid bacteria.</title>
        <authorList>
            <person name="Makarova K.S."/>
            <person name="Slesarev A."/>
            <person name="Wolf Y.I."/>
            <person name="Sorokin A."/>
            <person name="Mirkin B."/>
            <person name="Koonin E.V."/>
            <person name="Pavlov A."/>
            <person name="Pavlova N."/>
            <person name="Karamychev V."/>
            <person name="Polouchine N."/>
            <person name="Shakhova V."/>
            <person name="Grigoriev I."/>
            <person name="Lou Y."/>
            <person name="Rohksar D."/>
            <person name="Lucas S."/>
            <person name="Huang K."/>
            <person name="Goodstein D.M."/>
            <person name="Hawkins T."/>
            <person name="Plengvidhya V."/>
            <person name="Welker D."/>
            <person name="Hughes J."/>
            <person name="Goh Y."/>
            <person name="Benson A."/>
            <person name="Baldwin K."/>
            <person name="Lee J.-H."/>
            <person name="Diaz-Muniz I."/>
            <person name="Dosti B."/>
            <person name="Smeianov V."/>
            <person name="Wechter W."/>
            <person name="Barabote R."/>
            <person name="Lorca G."/>
            <person name="Altermann E."/>
            <person name="Barrangou R."/>
            <person name="Ganesan B."/>
            <person name="Xie Y."/>
            <person name="Rawsthorne H."/>
            <person name="Tamir D."/>
            <person name="Parker C."/>
            <person name="Breidt F."/>
            <person name="Broadbent J.R."/>
            <person name="Hutkins R."/>
            <person name="O'Sullivan D."/>
            <person name="Steele J."/>
            <person name="Unlu G."/>
            <person name="Saier M.H. Jr."/>
            <person name="Klaenhammer T."/>
            <person name="Richardson P."/>
            <person name="Kozyavkin S."/>
            <person name="Weimer B.C."/>
            <person name="Mills D.A."/>
        </authorList>
    </citation>
    <scope>NUCLEOTIDE SEQUENCE [LARGE SCALE GENOMIC DNA]</scope>
    <source>
        <strain>ATCC BAA-365 / Lb-18</strain>
    </source>
</reference>
<evidence type="ECO:0000255" key="1">
    <source>
        <dbReference type="HAMAP-Rule" id="MF_01448"/>
    </source>
</evidence>
<organism>
    <name type="scientific">Lactobacillus delbrueckii subsp. bulgaricus (strain ATCC BAA-365 / Lb-18)</name>
    <dbReference type="NCBI Taxonomy" id="321956"/>
    <lineage>
        <taxon>Bacteria</taxon>
        <taxon>Bacillati</taxon>
        <taxon>Bacillota</taxon>
        <taxon>Bacilli</taxon>
        <taxon>Lactobacillales</taxon>
        <taxon>Lactobacillaceae</taxon>
        <taxon>Lactobacillus</taxon>
    </lineage>
</organism>
<gene>
    <name type="ordered locus">LBUL_1483</name>
</gene>
<proteinExistence type="inferred from homology"/>
<feature type="chain" id="PRO_0000304836" description="UPF0473 protein LBUL_1483">
    <location>
        <begin position="1"/>
        <end position="107"/>
    </location>
</feature>
<dbReference type="EMBL" id="CP000412">
    <property type="protein sequence ID" value="ABJ58976.1"/>
    <property type="molecule type" value="Genomic_DNA"/>
</dbReference>
<dbReference type="RefSeq" id="WP_002876576.1">
    <property type="nucleotide sequence ID" value="NC_008529.1"/>
</dbReference>
<dbReference type="GeneID" id="69669389"/>
<dbReference type="KEGG" id="lbu:LBUL_1483"/>
<dbReference type="HOGENOM" id="CLU_146610_2_1_9"/>
<dbReference type="BioCyc" id="LDEL321956:LBUL_RS07005-MONOMER"/>
<dbReference type="HAMAP" id="MF_01448">
    <property type="entry name" value="UPF0473"/>
    <property type="match status" value="1"/>
</dbReference>
<dbReference type="InterPro" id="IPR018247">
    <property type="entry name" value="EF_Hand_1_Ca_BS"/>
</dbReference>
<dbReference type="InterPro" id="IPR009711">
    <property type="entry name" value="UPF0473"/>
</dbReference>
<dbReference type="NCBIfam" id="NF010217">
    <property type="entry name" value="PRK13678.1-4"/>
    <property type="match status" value="1"/>
</dbReference>
<dbReference type="PANTHER" id="PTHR40066">
    <property type="entry name" value="UPF0473 PROTEIN CBO2561/CLC_2432"/>
    <property type="match status" value="1"/>
</dbReference>
<dbReference type="PANTHER" id="PTHR40066:SF1">
    <property type="entry name" value="UPF0473 PROTEIN CBO2561_CLC_2432"/>
    <property type="match status" value="1"/>
</dbReference>
<dbReference type="Pfam" id="PF06949">
    <property type="entry name" value="DUF1292"/>
    <property type="match status" value="1"/>
</dbReference>
<accession>Q048Z6</accession>
<name>Y1483_LACDB</name>